<organism>
    <name type="scientific">Arabidopsis thaliana</name>
    <name type="common">Mouse-ear cress</name>
    <dbReference type="NCBI Taxonomy" id="3702"/>
    <lineage>
        <taxon>Eukaryota</taxon>
        <taxon>Viridiplantae</taxon>
        <taxon>Streptophyta</taxon>
        <taxon>Embryophyta</taxon>
        <taxon>Tracheophyta</taxon>
        <taxon>Spermatophyta</taxon>
        <taxon>Magnoliopsida</taxon>
        <taxon>eudicotyledons</taxon>
        <taxon>Gunneridae</taxon>
        <taxon>Pentapetalae</taxon>
        <taxon>rosids</taxon>
        <taxon>malvids</taxon>
        <taxon>Brassicales</taxon>
        <taxon>Brassicaceae</taxon>
        <taxon>Camelineae</taxon>
        <taxon>Arabidopsis</taxon>
    </lineage>
</organism>
<sequence>MLLFSSSSLQLREIFFPRIFSVFVKLNFLNSRGFSSDSAKALAAGISKAIKEGNFNLLDSSVYGSNLQRNETNLVLLSLESEPNSALKYFRWAEISGKDPSFYTIAHVLIRNGMFDVADKVFDEMITNRGKDFNVLGSIRDRSLDADVCKFLMECCCRYGMVDKALEIFVYSTQLGVVIPQDSVYRMLNSLIGSDRVDLIADHFDKLCRGGIEPSGVSAHGFVLDALFCKGEVTKALDFHRLVMERGFRVGIVSCNKVLKGLSVDQIEVASRLLSLVLDCGPAPNVVTFCTLINGFCKRGEMDRAFDLFKVMEQRGIEPDLIAYSTLIDGYFKAGMLGMGHKLFSQALHKGVKLDVVVFSSTIDVYVKSGDLATASVVYKRMLCQGISPNVVTYTILIKGLCQDGRIYEAFGMYGQILKRGMEPSIVTYSSLIDGFCKCGNLRSGFALYEDMIKMGYPPDVVIYGVLVDGLSKQGLMLHAMRFSVKMLGQSIRLNVVVFNSLIDGWCRLNRFDEALKVFRLMGIYGIKPDVATFTTVMRVSIMEGRLEEALFLFFRMFKMGLEPDALAYCTLIDAFCKHMKPTIGLQLFDLMQRNKISADIAVCNVVIHLLFKCHRIEDASKFFNNLIEGKMEPDIVTYNTMICGYCSLRRLDEAERIFELLKVTPFGPNTVTLTILIHVLCKNNDMDGAIRMFSIMAEKGSKPNAVTYGCLMDWFSKSVDIEGSFKLFEEMQEKGISPSIVSYSIIIDGLCKRGRVDEATNIFHQAIDAKLLPDVVAYAILIRGYCKVGRLVEAALLYEHMLRNGVKPDDLLQRALSEYNPPKWLMSKGVWVHDKPMPD</sequence>
<accession>Q9C6S6</accession>
<accession>F4IAZ0</accession>
<feature type="chain" id="PRO_0000342808" description="Putative pentatricopeptide repeat-containing protein At1g31840">
    <location>
        <begin position="1"/>
        <end position="840"/>
    </location>
</feature>
<feature type="repeat" description="PPR 1">
    <location>
        <begin position="98"/>
        <end position="128"/>
    </location>
</feature>
<feature type="repeat" description="PPR 2">
    <location>
        <begin position="145"/>
        <end position="179"/>
    </location>
</feature>
<feature type="repeat" description="PPR 3">
    <location>
        <begin position="180"/>
        <end position="214"/>
    </location>
</feature>
<feature type="repeat" description="PPR 4">
    <location>
        <begin position="216"/>
        <end position="250"/>
    </location>
</feature>
<feature type="repeat" description="PPR 5">
    <location>
        <begin position="251"/>
        <end position="284"/>
    </location>
</feature>
<feature type="repeat" description="PPR 6">
    <location>
        <begin position="285"/>
        <end position="319"/>
    </location>
</feature>
<feature type="repeat" description="PPR 7">
    <location>
        <begin position="320"/>
        <end position="354"/>
    </location>
</feature>
<feature type="repeat" description="PPR 8">
    <location>
        <begin position="355"/>
        <end position="389"/>
    </location>
</feature>
<feature type="repeat" description="PPR 9">
    <location>
        <begin position="390"/>
        <end position="424"/>
    </location>
</feature>
<feature type="repeat" description="PPR 10">
    <location>
        <begin position="425"/>
        <end position="459"/>
    </location>
</feature>
<feature type="repeat" description="PPR 11">
    <location>
        <begin position="460"/>
        <end position="494"/>
    </location>
</feature>
<feature type="repeat" description="PPR 12">
    <location>
        <begin position="495"/>
        <end position="529"/>
    </location>
</feature>
<feature type="repeat" description="PPR 13">
    <location>
        <begin position="530"/>
        <end position="564"/>
    </location>
</feature>
<feature type="repeat" description="PPR 14">
    <location>
        <begin position="565"/>
        <end position="599"/>
    </location>
</feature>
<feature type="repeat" description="PPR 15">
    <location>
        <begin position="600"/>
        <end position="634"/>
    </location>
</feature>
<feature type="repeat" description="PPR 16">
    <location>
        <begin position="635"/>
        <end position="669"/>
    </location>
</feature>
<feature type="repeat" description="PPR 17">
    <location>
        <begin position="670"/>
        <end position="704"/>
    </location>
</feature>
<feature type="repeat" description="PPR 18">
    <location>
        <begin position="705"/>
        <end position="739"/>
    </location>
</feature>
<feature type="repeat" description="PPR 19">
    <location>
        <begin position="740"/>
        <end position="774"/>
    </location>
</feature>
<feature type="repeat" description="PPR 20">
    <location>
        <begin position="775"/>
        <end position="809"/>
    </location>
</feature>
<proteinExistence type="inferred from homology"/>
<reference key="1">
    <citation type="journal article" date="2000" name="Nature">
        <title>Sequence and analysis of chromosome 1 of the plant Arabidopsis thaliana.</title>
        <authorList>
            <person name="Theologis A."/>
            <person name="Ecker J.R."/>
            <person name="Palm C.J."/>
            <person name="Federspiel N.A."/>
            <person name="Kaul S."/>
            <person name="White O."/>
            <person name="Alonso J."/>
            <person name="Altafi H."/>
            <person name="Araujo R."/>
            <person name="Bowman C.L."/>
            <person name="Brooks S.Y."/>
            <person name="Buehler E."/>
            <person name="Chan A."/>
            <person name="Chao Q."/>
            <person name="Chen H."/>
            <person name="Cheuk R.F."/>
            <person name="Chin C.W."/>
            <person name="Chung M.K."/>
            <person name="Conn L."/>
            <person name="Conway A.B."/>
            <person name="Conway A.R."/>
            <person name="Creasy T.H."/>
            <person name="Dewar K."/>
            <person name="Dunn P."/>
            <person name="Etgu P."/>
            <person name="Feldblyum T.V."/>
            <person name="Feng J.-D."/>
            <person name="Fong B."/>
            <person name="Fujii C.Y."/>
            <person name="Gill J.E."/>
            <person name="Goldsmith A.D."/>
            <person name="Haas B."/>
            <person name="Hansen N.F."/>
            <person name="Hughes B."/>
            <person name="Huizar L."/>
            <person name="Hunter J.L."/>
            <person name="Jenkins J."/>
            <person name="Johnson-Hopson C."/>
            <person name="Khan S."/>
            <person name="Khaykin E."/>
            <person name="Kim C.J."/>
            <person name="Koo H.L."/>
            <person name="Kremenetskaia I."/>
            <person name="Kurtz D.B."/>
            <person name="Kwan A."/>
            <person name="Lam B."/>
            <person name="Langin-Hooper S."/>
            <person name="Lee A."/>
            <person name="Lee J.M."/>
            <person name="Lenz C.A."/>
            <person name="Li J.H."/>
            <person name="Li Y.-P."/>
            <person name="Lin X."/>
            <person name="Liu S.X."/>
            <person name="Liu Z.A."/>
            <person name="Luros J.S."/>
            <person name="Maiti R."/>
            <person name="Marziali A."/>
            <person name="Militscher J."/>
            <person name="Miranda M."/>
            <person name="Nguyen M."/>
            <person name="Nierman W.C."/>
            <person name="Osborne B.I."/>
            <person name="Pai G."/>
            <person name="Peterson J."/>
            <person name="Pham P.K."/>
            <person name="Rizzo M."/>
            <person name="Rooney T."/>
            <person name="Rowley D."/>
            <person name="Sakano H."/>
            <person name="Salzberg S.L."/>
            <person name="Schwartz J.R."/>
            <person name="Shinn P."/>
            <person name="Southwick A.M."/>
            <person name="Sun H."/>
            <person name="Tallon L.J."/>
            <person name="Tambunga G."/>
            <person name="Toriumi M.J."/>
            <person name="Town C.D."/>
            <person name="Utterback T."/>
            <person name="Van Aken S."/>
            <person name="Vaysberg M."/>
            <person name="Vysotskaia V.S."/>
            <person name="Walker M."/>
            <person name="Wu D."/>
            <person name="Yu G."/>
            <person name="Fraser C.M."/>
            <person name="Venter J.C."/>
            <person name="Davis R.W."/>
        </authorList>
    </citation>
    <scope>NUCLEOTIDE SEQUENCE [LARGE SCALE GENOMIC DNA]</scope>
    <source>
        <strain>cv. Columbia</strain>
    </source>
</reference>
<reference key="2">
    <citation type="journal article" date="2017" name="Plant J.">
        <title>Araport11: a complete reannotation of the Arabidopsis thaliana reference genome.</title>
        <authorList>
            <person name="Cheng C.Y."/>
            <person name="Krishnakumar V."/>
            <person name="Chan A.P."/>
            <person name="Thibaud-Nissen F."/>
            <person name="Schobel S."/>
            <person name="Town C.D."/>
        </authorList>
    </citation>
    <scope>GENOME REANNOTATION</scope>
    <source>
        <strain>cv. Columbia</strain>
    </source>
</reference>
<reference key="3">
    <citation type="journal article" date="2004" name="Plant Cell">
        <title>Genome-wide analysis of Arabidopsis pentatricopeptide repeat proteins reveals their essential role in organelle biogenesis.</title>
        <authorList>
            <person name="Lurin C."/>
            <person name="Andres C."/>
            <person name="Aubourg S."/>
            <person name="Bellaoui M."/>
            <person name="Bitton F."/>
            <person name="Bruyere C."/>
            <person name="Caboche M."/>
            <person name="Debast C."/>
            <person name="Gualberto J."/>
            <person name="Hoffmann B."/>
            <person name="Lecharny A."/>
            <person name="Le Ret M."/>
            <person name="Martin-Magniette M.-L."/>
            <person name="Mireau H."/>
            <person name="Peeters N."/>
            <person name="Renou J.-P."/>
            <person name="Szurek B."/>
            <person name="Taconnat L."/>
            <person name="Small I."/>
        </authorList>
    </citation>
    <scope>GENE FAMILY</scope>
</reference>
<comment type="alternative products">
    <event type="alternative splicing"/>
    <isoform>
        <id>Q9C6S6-1</id>
        <name>1</name>
        <sequence type="displayed"/>
    </isoform>
    <text>A number of isoforms are produced. According to EST sequences.</text>
</comment>
<comment type="similarity">
    <text evidence="1">Belongs to the PPR family. P subfamily.</text>
</comment>
<comment type="sequence caution" evidence="1">
    <conflict type="erroneous gene model prediction">
        <sequence resource="EMBL-CDS" id="AAG50731"/>
    </conflict>
</comment>
<comment type="online information" name="Pentatricopeptide repeat proteins">
    <link uri="https://ppr.plantenergy.uwa.edu.au"/>
</comment>
<evidence type="ECO:0000305" key="1"/>
<name>PPR67_ARATH</name>
<keyword id="KW-0025">Alternative splicing</keyword>
<keyword id="KW-1185">Reference proteome</keyword>
<keyword id="KW-0677">Repeat</keyword>
<dbReference type="EMBL" id="AC079041">
    <property type="protein sequence ID" value="AAG50731.1"/>
    <property type="status" value="ALT_SEQ"/>
    <property type="molecule type" value="Genomic_DNA"/>
</dbReference>
<dbReference type="EMBL" id="CP002684">
    <property type="protein sequence ID" value="AEE31403.1"/>
    <property type="molecule type" value="Genomic_DNA"/>
</dbReference>
<dbReference type="PIR" id="E86442">
    <property type="entry name" value="E86442"/>
</dbReference>
<dbReference type="RefSeq" id="NP_174467.4">
    <molecule id="Q9C6S6-1"/>
    <property type="nucleotide sequence ID" value="NM_102921.5"/>
</dbReference>
<dbReference type="SMR" id="Q9C6S6"/>
<dbReference type="FunCoup" id="Q9C6S6">
    <property type="interactions" value="2"/>
</dbReference>
<dbReference type="iPTMnet" id="Q9C6S6"/>
<dbReference type="PaxDb" id="3702-AT1G31840.1"/>
<dbReference type="ProteomicsDB" id="226162">
    <molecule id="Q9C6S6-1"/>
</dbReference>
<dbReference type="EnsemblPlants" id="AT1G31840.1">
    <molecule id="Q9C6S6-1"/>
    <property type="protein sequence ID" value="AT1G31840.1"/>
    <property type="gene ID" value="AT1G31840"/>
</dbReference>
<dbReference type="GeneID" id="840074"/>
<dbReference type="Gramene" id="AT1G31840.1">
    <molecule id="Q9C6S6-1"/>
    <property type="protein sequence ID" value="AT1G31840.1"/>
    <property type="gene ID" value="AT1G31840"/>
</dbReference>
<dbReference type="KEGG" id="ath:AT1G31840"/>
<dbReference type="Araport" id="AT1G31840"/>
<dbReference type="TAIR" id="AT1G31840"/>
<dbReference type="eggNOG" id="KOG4197">
    <property type="taxonomic scope" value="Eukaryota"/>
</dbReference>
<dbReference type="HOGENOM" id="CLU_002706_49_12_1"/>
<dbReference type="InParanoid" id="Q9C6S6"/>
<dbReference type="OMA" id="TVLMQGQ"/>
<dbReference type="PRO" id="PR:Q9C6S6"/>
<dbReference type="Proteomes" id="UP000006548">
    <property type="component" value="Chromosome 1"/>
</dbReference>
<dbReference type="ExpressionAtlas" id="Q9C6S6">
    <property type="expression patterns" value="baseline and differential"/>
</dbReference>
<dbReference type="Gene3D" id="1.25.40.10">
    <property type="entry name" value="Tetratricopeptide repeat domain"/>
    <property type="match status" value="8"/>
</dbReference>
<dbReference type="InterPro" id="IPR002885">
    <property type="entry name" value="Pentatricopeptide_rpt"/>
</dbReference>
<dbReference type="InterPro" id="IPR051222">
    <property type="entry name" value="PPR/CCM1_RNA-binding"/>
</dbReference>
<dbReference type="InterPro" id="IPR011990">
    <property type="entry name" value="TPR-like_helical_dom_sf"/>
</dbReference>
<dbReference type="NCBIfam" id="TIGR00756">
    <property type="entry name" value="PPR"/>
    <property type="match status" value="15"/>
</dbReference>
<dbReference type="PANTHER" id="PTHR47942:SF16">
    <property type="entry name" value="PENTATRICOPEPTIDE REPEAT DOMAIN CONTAINING PROTEIN-RELATED"/>
    <property type="match status" value="1"/>
</dbReference>
<dbReference type="PANTHER" id="PTHR47942">
    <property type="entry name" value="TETRATRICOPEPTIDE REPEAT (TPR)-LIKE SUPERFAMILY PROTEIN-RELATED"/>
    <property type="match status" value="1"/>
</dbReference>
<dbReference type="Pfam" id="PF01535">
    <property type="entry name" value="PPR"/>
    <property type="match status" value="3"/>
</dbReference>
<dbReference type="Pfam" id="PF13041">
    <property type="entry name" value="PPR_2"/>
    <property type="match status" value="7"/>
</dbReference>
<dbReference type="SUPFAM" id="SSF81901">
    <property type="entry name" value="HCP-like"/>
    <property type="match status" value="1"/>
</dbReference>
<dbReference type="PROSITE" id="PS51375">
    <property type="entry name" value="PPR"/>
    <property type="match status" value="19"/>
</dbReference>
<protein>
    <recommendedName>
        <fullName>Putative pentatricopeptide repeat-containing protein At1g31840</fullName>
    </recommendedName>
</protein>
<gene>
    <name type="ordered locus">At1g31840</name>
    <name type="ORF">F5M6.15</name>
</gene>